<comment type="function">
    <text evidence="4">May negatively regulate RAC1 signaling and RAC1-driven cytoskeletal remodeling (Probable). May regulate chemotaxis, cell migration and epithelial polarization by controlling the polarity, plasticity, duration and extent of protrusions (Probable).</text>
</comment>
<comment type="subunit">
    <text evidence="1">Interacts with RAC1 (GTP-bound form preferentially).</text>
</comment>
<comment type="subcellular location">
    <subcellularLocation>
        <location evidence="1">Membrane</location>
        <topology evidence="1">Lipid-anchor</topology>
    </subcellularLocation>
</comment>
<comment type="similarity">
    <text evidence="3">Belongs to the CYRI family.</text>
</comment>
<dbReference type="EMBL" id="AL136704">
    <property type="protein sequence ID" value="CAB66639.1"/>
    <property type="molecule type" value="mRNA"/>
</dbReference>
<dbReference type="EMBL" id="AK055334">
    <property type="protein sequence ID" value="BAG51503.1"/>
    <property type="molecule type" value="mRNA"/>
</dbReference>
<dbReference type="EMBL" id="AK315065">
    <property type="protein sequence ID" value="BAG37539.1"/>
    <property type="molecule type" value="mRNA"/>
</dbReference>
<dbReference type="EMBL" id="CR533504">
    <property type="protein sequence ID" value="CAG38535.1"/>
    <property type="molecule type" value="mRNA"/>
</dbReference>
<dbReference type="EMBL" id="AC104623">
    <property type="protein sequence ID" value="AAY24282.1"/>
    <property type="molecule type" value="Genomic_DNA"/>
</dbReference>
<dbReference type="EMBL" id="CH471053">
    <property type="protein sequence ID" value="EAX00879.1"/>
    <property type="molecule type" value="Genomic_DNA"/>
</dbReference>
<dbReference type="EMBL" id="BC038971">
    <property type="protein sequence ID" value="AAH38971.1"/>
    <property type="molecule type" value="mRNA"/>
</dbReference>
<dbReference type="CCDS" id="CCDS1688.1"/>
<dbReference type="RefSeq" id="NP_110424.1">
    <property type="nucleotide sequence ID" value="NM_030797.4"/>
</dbReference>
<dbReference type="RefSeq" id="XP_005262687.1">
    <property type="nucleotide sequence ID" value="XM_005262630.3"/>
</dbReference>
<dbReference type="RefSeq" id="XP_006712171.1">
    <property type="nucleotide sequence ID" value="XM_006712108.3"/>
</dbReference>
<dbReference type="RefSeq" id="XP_024308931.1">
    <property type="nucleotide sequence ID" value="XM_024453163.2"/>
</dbReference>
<dbReference type="RefSeq" id="XP_024308934.1">
    <property type="nucleotide sequence ID" value="XM_024453166.2"/>
</dbReference>
<dbReference type="RefSeq" id="XP_047301895.1">
    <property type="nucleotide sequence ID" value="XM_047445939.1"/>
</dbReference>
<dbReference type="RefSeq" id="XP_047301896.1">
    <property type="nucleotide sequence ID" value="XM_047445940.1"/>
</dbReference>
<dbReference type="RefSeq" id="XP_047301897.1">
    <property type="nucleotide sequence ID" value="XM_047445941.1"/>
</dbReference>
<dbReference type="RefSeq" id="XP_047301898.1">
    <property type="nucleotide sequence ID" value="XM_047445942.1"/>
</dbReference>
<dbReference type="RefSeq" id="XP_047301899.1">
    <property type="nucleotide sequence ID" value="XM_047445943.1"/>
</dbReference>
<dbReference type="RefSeq" id="XP_047301900.1">
    <property type="nucleotide sequence ID" value="XM_047445944.1"/>
</dbReference>
<dbReference type="RefSeq" id="XP_047301901.1">
    <property type="nucleotide sequence ID" value="XM_047445945.1"/>
</dbReference>
<dbReference type="RefSeq" id="XP_054200063.1">
    <property type="nucleotide sequence ID" value="XM_054344088.1"/>
</dbReference>
<dbReference type="RefSeq" id="XP_054200064.1">
    <property type="nucleotide sequence ID" value="XM_054344089.1"/>
</dbReference>
<dbReference type="RefSeq" id="XP_054200065.1">
    <property type="nucleotide sequence ID" value="XM_054344090.1"/>
</dbReference>
<dbReference type="RefSeq" id="XP_054200066.1">
    <property type="nucleotide sequence ID" value="XM_054344091.1"/>
</dbReference>
<dbReference type="RefSeq" id="XP_054200067.1">
    <property type="nucleotide sequence ID" value="XM_054344092.1"/>
</dbReference>
<dbReference type="RefSeq" id="XP_054200068.1">
    <property type="nucleotide sequence ID" value="XM_054344093.1"/>
</dbReference>
<dbReference type="RefSeq" id="XP_054200069.1">
    <property type="nucleotide sequence ID" value="XM_054344094.1"/>
</dbReference>
<dbReference type="RefSeq" id="XP_054200070.1">
    <property type="nucleotide sequence ID" value="XM_054344095.1"/>
</dbReference>
<dbReference type="RefSeq" id="XP_054200071.1">
    <property type="nucleotide sequence ID" value="XM_054344096.1"/>
</dbReference>
<dbReference type="RefSeq" id="XP_054200072.1">
    <property type="nucleotide sequence ID" value="XM_054344097.1"/>
</dbReference>
<dbReference type="SMR" id="Q9H0Q0"/>
<dbReference type="BioGRID" id="123517">
    <property type="interactions" value="9"/>
</dbReference>
<dbReference type="FunCoup" id="Q9H0Q0">
    <property type="interactions" value="12"/>
</dbReference>
<dbReference type="IntAct" id="Q9H0Q0">
    <property type="interactions" value="4"/>
</dbReference>
<dbReference type="STRING" id="9606.ENSP00000370724"/>
<dbReference type="iPTMnet" id="Q9H0Q0"/>
<dbReference type="PhosphoSitePlus" id="Q9H0Q0"/>
<dbReference type="SwissPalm" id="Q9H0Q0"/>
<dbReference type="BioMuta" id="FAM49A"/>
<dbReference type="DMDM" id="52782791"/>
<dbReference type="jPOST" id="Q9H0Q0"/>
<dbReference type="MassIVE" id="Q9H0Q0"/>
<dbReference type="PaxDb" id="9606-ENSP00000370724"/>
<dbReference type="PeptideAtlas" id="Q9H0Q0"/>
<dbReference type="ProteomicsDB" id="80310"/>
<dbReference type="Pumba" id="Q9H0Q0"/>
<dbReference type="Antibodypedia" id="55941">
    <property type="antibodies" value="65 antibodies from 14 providers"/>
</dbReference>
<dbReference type="DNASU" id="81553"/>
<dbReference type="Ensembl" id="ENST00000381323.7">
    <property type="protein sequence ID" value="ENSP00000370724.3"/>
    <property type="gene ID" value="ENSG00000197872.11"/>
</dbReference>
<dbReference type="Ensembl" id="ENST00000406434.5">
    <property type="protein sequence ID" value="ENSP00000384771.1"/>
    <property type="gene ID" value="ENSG00000197872.11"/>
</dbReference>
<dbReference type="GeneID" id="81553"/>
<dbReference type="KEGG" id="hsa:81553"/>
<dbReference type="MANE-Select" id="ENST00000381323.7">
    <property type="protein sequence ID" value="ENSP00000370724.3"/>
    <property type="RefSeq nucleotide sequence ID" value="NM_030797.4"/>
    <property type="RefSeq protein sequence ID" value="NP_110424.1"/>
</dbReference>
<dbReference type="UCSC" id="uc002rck.3">
    <property type="organism name" value="human"/>
</dbReference>
<dbReference type="AGR" id="HGNC:25373"/>
<dbReference type="CTD" id="81553"/>
<dbReference type="DisGeNET" id="81553"/>
<dbReference type="GeneCards" id="CYRIA"/>
<dbReference type="HGNC" id="HGNC:25373">
    <property type="gene designation" value="CYRIA"/>
</dbReference>
<dbReference type="HPA" id="ENSG00000197872">
    <property type="expression patterns" value="Tissue enhanced (brain)"/>
</dbReference>
<dbReference type="neXtProt" id="NX_Q9H0Q0"/>
<dbReference type="OpenTargets" id="ENSG00000197872"/>
<dbReference type="PharmGKB" id="PA128394730"/>
<dbReference type="VEuPathDB" id="HostDB:ENSG00000197872"/>
<dbReference type="eggNOG" id="KOG3951">
    <property type="taxonomic scope" value="Eukaryota"/>
</dbReference>
<dbReference type="GeneTree" id="ENSGT00390000015159"/>
<dbReference type="HOGENOM" id="CLU_056470_0_0_1"/>
<dbReference type="InParanoid" id="Q9H0Q0"/>
<dbReference type="OMA" id="MANVCHD"/>
<dbReference type="OrthoDB" id="60973at2759"/>
<dbReference type="PAN-GO" id="Q9H0Q0">
    <property type="GO annotations" value="0 GO annotations based on evolutionary models"/>
</dbReference>
<dbReference type="PhylomeDB" id="Q9H0Q0"/>
<dbReference type="TreeFam" id="TF314541"/>
<dbReference type="PathwayCommons" id="Q9H0Q0"/>
<dbReference type="SignaLink" id="Q9H0Q0"/>
<dbReference type="BioGRID-ORCS" id="81553">
    <property type="hits" value="13 hits in 1141 CRISPR screens"/>
</dbReference>
<dbReference type="CD-CODE" id="FB4E32DD">
    <property type="entry name" value="Presynaptic clusters and postsynaptic densities"/>
</dbReference>
<dbReference type="ChiTaRS" id="FAM49A">
    <property type="organism name" value="human"/>
</dbReference>
<dbReference type="GeneWiki" id="FAM49A"/>
<dbReference type="GenomeRNAi" id="81553"/>
<dbReference type="Pharos" id="Q9H0Q0">
    <property type="development level" value="Tdark"/>
</dbReference>
<dbReference type="PRO" id="PR:Q9H0Q0"/>
<dbReference type="Proteomes" id="UP000005640">
    <property type="component" value="Chromosome 2"/>
</dbReference>
<dbReference type="RNAct" id="Q9H0Q0">
    <property type="molecule type" value="protein"/>
</dbReference>
<dbReference type="Bgee" id="ENSG00000197872">
    <property type="expression patterns" value="Expressed in cortical plate and 166 other cell types or tissues"/>
</dbReference>
<dbReference type="ExpressionAtlas" id="Q9H0Q0">
    <property type="expression patterns" value="baseline and differential"/>
</dbReference>
<dbReference type="GO" id="GO:0016020">
    <property type="term" value="C:membrane"/>
    <property type="evidence" value="ECO:0007669"/>
    <property type="project" value="UniProtKB-SubCell"/>
</dbReference>
<dbReference type="GO" id="GO:0031267">
    <property type="term" value="F:small GTPase binding"/>
    <property type="evidence" value="ECO:0007669"/>
    <property type="project" value="InterPro"/>
</dbReference>
<dbReference type="GO" id="GO:0030833">
    <property type="term" value="P:regulation of actin filament polymerization"/>
    <property type="evidence" value="ECO:0007669"/>
    <property type="project" value="InterPro"/>
</dbReference>
<dbReference type="InterPro" id="IPR039789">
    <property type="entry name" value="CYRI"/>
</dbReference>
<dbReference type="InterPro" id="IPR009828">
    <property type="entry name" value="CYRIA/CYRIB_Rac1-bd"/>
</dbReference>
<dbReference type="PANTHER" id="PTHR12422">
    <property type="entry name" value="GH09096P"/>
    <property type="match status" value="1"/>
</dbReference>
<dbReference type="Pfam" id="PF07159">
    <property type="entry name" value="CYRIA-B_Rac1-bd"/>
    <property type="match status" value="1"/>
</dbReference>
<accession>Q9H0Q0</accession>
<accession>B3KNZ1</accession>
<accession>Q53QW2</accession>
<reference key="1">
    <citation type="journal article" date="2001" name="Genome Res.">
        <title>Towards a catalog of human genes and proteins: sequencing and analysis of 500 novel complete protein coding human cDNAs.</title>
        <authorList>
            <person name="Wiemann S."/>
            <person name="Weil B."/>
            <person name="Wellenreuther R."/>
            <person name="Gassenhuber J."/>
            <person name="Glassl S."/>
            <person name="Ansorge W."/>
            <person name="Boecher M."/>
            <person name="Bloecker H."/>
            <person name="Bauersachs S."/>
            <person name="Blum H."/>
            <person name="Lauber J."/>
            <person name="Duesterhoeft A."/>
            <person name="Beyer A."/>
            <person name="Koehrer K."/>
            <person name="Strack N."/>
            <person name="Mewes H.-W."/>
            <person name="Ottenwaelder B."/>
            <person name="Obermaier B."/>
            <person name="Tampe J."/>
            <person name="Heubner D."/>
            <person name="Wambutt R."/>
            <person name="Korn B."/>
            <person name="Klein M."/>
            <person name="Poustka A."/>
        </authorList>
    </citation>
    <scope>NUCLEOTIDE SEQUENCE [LARGE SCALE MRNA]</scope>
    <source>
        <tissue>Kidney</tissue>
    </source>
</reference>
<reference key="2">
    <citation type="journal article" date="2004" name="Nat. Genet.">
        <title>Complete sequencing and characterization of 21,243 full-length human cDNAs.</title>
        <authorList>
            <person name="Ota T."/>
            <person name="Suzuki Y."/>
            <person name="Nishikawa T."/>
            <person name="Otsuki T."/>
            <person name="Sugiyama T."/>
            <person name="Irie R."/>
            <person name="Wakamatsu A."/>
            <person name="Hayashi K."/>
            <person name="Sato H."/>
            <person name="Nagai K."/>
            <person name="Kimura K."/>
            <person name="Makita H."/>
            <person name="Sekine M."/>
            <person name="Obayashi M."/>
            <person name="Nishi T."/>
            <person name="Shibahara T."/>
            <person name="Tanaka T."/>
            <person name="Ishii S."/>
            <person name="Yamamoto J."/>
            <person name="Saito K."/>
            <person name="Kawai Y."/>
            <person name="Isono Y."/>
            <person name="Nakamura Y."/>
            <person name="Nagahari K."/>
            <person name="Murakami K."/>
            <person name="Yasuda T."/>
            <person name="Iwayanagi T."/>
            <person name="Wagatsuma M."/>
            <person name="Shiratori A."/>
            <person name="Sudo H."/>
            <person name="Hosoiri T."/>
            <person name="Kaku Y."/>
            <person name="Kodaira H."/>
            <person name="Kondo H."/>
            <person name="Sugawara M."/>
            <person name="Takahashi M."/>
            <person name="Kanda K."/>
            <person name="Yokoi T."/>
            <person name="Furuya T."/>
            <person name="Kikkawa E."/>
            <person name="Omura Y."/>
            <person name="Abe K."/>
            <person name="Kamihara K."/>
            <person name="Katsuta N."/>
            <person name="Sato K."/>
            <person name="Tanikawa M."/>
            <person name="Yamazaki M."/>
            <person name="Ninomiya K."/>
            <person name="Ishibashi T."/>
            <person name="Yamashita H."/>
            <person name="Murakawa K."/>
            <person name="Fujimori K."/>
            <person name="Tanai H."/>
            <person name="Kimata M."/>
            <person name="Watanabe M."/>
            <person name="Hiraoka S."/>
            <person name="Chiba Y."/>
            <person name="Ishida S."/>
            <person name="Ono Y."/>
            <person name="Takiguchi S."/>
            <person name="Watanabe S."/>
            <person name="Yosida M."/>
            <person name="Hotuta T."/>
            <person name="Kusano J."/>
            <person name="Kanehori K."/>
            <person name="Takahashi-Fujii A."/>
            <person name="Hara H."/>
            <person name="Tanase T.-O."/>
            <person name="Nomura Y."/>
            <person name="Togiya S."/>
            <person name="Komai F."/>
            <person name="Hara R."/>
            <person name="Takeuchi K."/>
            <person name="Arita M."/>
            <person name="Imose N."/>
            <person name="Musashino K."/>
            <person name="Yuuki H."/>
            <person name="Oshima A."/>
            <person name="Sasaki N."/>
            <person name="Aotsuka S."/>
            <person name="Yoshikawa Y."/>
            <person name="Matsunawa H."/>
            <person name="Ichihara T."/>
            <person name="Shiohata N."/>
            <person name="Sano S."/>
            <person name="Moriya S."/>
            <person name="Momiyama H."/>
            <person name="Satoh N."/>
            <person name="Takami S."/>
            <person name="Terashima Y."/>
            <person name="Suzuki O."/>
            <person name="Nakagawa S."/>
            <person name="Senoh A."/>
            <person name="Mizoguchi H."/>
            <person name="Goto Y."/>
            <person name="Shimizu F."/>
            <person name="Wakebe H."/>
            <person name="Hishigaki H."/>
            <person name="Watanabe T."/>
            <person name="Sugiyama A."/>
            <person name="Takemoto M."/>
            <person name="Kawakami B."/>
            <person name="Yamazaki M."/>
            <person name="Watanabe K."/>
            <person name="Kumagai A."/>
            <person name="Itakura S."/>
            <person name="Fukuzumi Y."/>
            <person name="Fujimori Y."/>
            <person name="Komiyama M."/>
            <person name="Tashiro H."/>
            <person name="Tanigami A."/>
            <person name="Fujiwara T."/>
            <person name="Ono T."/>
            <person name="Yamada K."/>
            <person name="Fujii Y."/>
            <person name="Ozaki K."/>
            <person name="Hirao M."/>
            <person name="Ohmori Y."/>
            <person name="Kawabata A."/>
            <person name="Hikiji T."/>
            <person name="Kobatake N."/>
            <person name="Inagaki H."/>
            <person name="Ikema Y."/>
            <person name="Okamoto S."/>
            <person name="Okitani R."/>
            <person name="Kawakami T."/>
            <person name="Noguchi S."/>
            <person name="Itoh T."/>
            <person name="Shigeta K."/>
            <person name="Senba T."/>
            <person name="Matsumura K."/>
            <person name="Nakajima Y."/>
            <person name="Mizuno T."/>
            <person name="Morinaga M."/>
            <person name="Sasaki M."/>
            <person name="Togashi T."/>
            <person name="Oyama M."/>
            <person name="Hata H."/>
            <person name="Watanabe M."/>
            <person name="Komatsu T."/>
            <person name="Mizushima-Sugano J."/>
            <person name="Satoh T."/>
            <person name="Shirai Y."/>
            <person name="Takahashi Y."/>
            <person name="Nakagawa K."/>
            <person name="Okumura K."/>
            <person name="Nagase T."/>
            <person name="Nomura N."/>
            <person name="Kikuchi H."/>
            <person name="Masuho Y."/>
            <person name="Yamashita R."/>
            <person name="Nakai K."/>
            <person name="Yada T."/>
            <person name="Nakamura Y."/>
            <person name="Ohara O."/>
            <person name="Isogai T."/>
            <person name="Sugano S."/>
        </authorList>
    </citation>
    <scope>NUCLEOTIDE SEQUENCE [LARGE SCALE MRNA]</scope>
    <source>
        <tissue>Brain</tissue>
        <tissue>Placenta</tissue>
    </source>
</reference>
<reference key="3">
    <citation type="submission" date="2004-06" db="EMBL/GenBank/DDBJ databases">
        <title>Cloning of human full open reading frames in Gateway(TM) system entry vector (pDONR201).</title>
        <authorList>
            <person name="Ebert L."/>
            <person name="Schick M."/>
            <person name="Neubert P."/>
            <person name="Schatten R."/>
            <person name="Henze S."/>
            <person name="Korn B."/>
        </authorList>
    </citation>
    <scope>NUCLEOTIDE SEQUENCE [LARGE SCALE MRNA]</scope>
</reference>
<reference key="4">
    <citation type="journal article" date="2005" name="Nature">
        <title>Generation and annotation of the DNA sequences of human chromosomes 2 and 4.</title>
        <authorList>
            <person name="Hillier L.W."/>
            <person name="Graves T.A."/>
            <person name="Fulton R.S."/>
            <person name="Fulton L.A."/>
            <person name="Pepin K.H."/>
            <person name="Minx P."/>
            <person name="Wagner-McPherson C."/>
            <person name="Layman D."/>
            <person name="Wylie K."/>
            <person name="Sekhon M."/>
            <person name="Becker M.C."/>
            <person name="Fewell G.A."/>
            <person name="Delehaunty K.D."/>
            <person name="Miner T.L."/>
            <person name="Nash W.E."/>
            <person name="Kremitzki C."/>
            <person name="Oddy L."/>
            <person name="Du H."/>
            <person name="Sun H."/>
            <person name="Bradshaw-Cordum H."/>
            <person name="Ali J."/>
            <person name="Carter J."/>
            <person name="Cordes M."/>
            <person name="Harris A."/>
            <person name="Isak A."/>
            <person name="van Brunt A."/>
            <person name="Nguyen C."/>
            <person name="Du F."/>
            <person name="Courtney L."/>
            <person name="Kalicki J."/>
            <person name="Ozersky P."/>
            <person name="Abbott S."/>
            <person name="Armstrong J."/>
            <person name="Belter E.A."/>
            <person name="Caruso L."/>
            <person name="Cedroni M."/>
            <person name="Cotton M."/>
            <person name="Davidson T."/>
            <person name="Desai A."/>
            <person name="Elliott G."/>
            <person name="Erb T."/>
            <person name="Fronick C."/>
            <person name="Gaige T."/>
            <person name="Haakenson W."/>
            <person name="Haglund K."/>
            <person name="Holmes A."/>
            <person name="Harkins R."/>
            <person name="Kim K."/>
            <person name="Kruchowski S.S."/>
            <person name="Strong C.M."/>
            <person name="Grewal N."/>
            <person name="Goyea E."/>
            <person name="Hou S."/>
            <person name="Levy A."/>
            <person name="Martinka S."/>
            <person name="Mead K."/>
            <person name="McLellan M.D."/>
            <person name="Meyer R."/>
            <person name="Randall-Maher J."/>
            <person name="Tomlinson C."/>
            <person name="Dauphin-Kohlberg S."/>
            <person name="Kozlowicz-Reilly A."/>
            <person name="Shah N."/>
            <person name="Swearengen-Shahid S."/>
            <person name="Snider J."/>
            <person name="Strong J.T."/>
            <person name="Thompson J."/>
            <person name="Yoakum M."/>
            <person name="Leonard S."/>
            <person name="Pearman C."/>
            <person name="Trani L."/>
            <person name="Radionenko M."/>
            <person name="Waligorski J.E."/>
            <person name="Wang C."/>
            <person name="Rock S.M."/>
            <person name="Tin-Wollam A.-M."/>
            <person name="Maupin R."/>
            <person name="Latreille P."/>
            <person name="Wendl M.C."/>
            <person name="Yang S.-P."/>
            <person name="Pohl C."/>
            <person name="Wallis J.W."/>
            <person name="Spieth J."/>
            <person name="Bieri T.A."/>
            <person name="Berkowicz N."/>
            <person name="Nelson J.O."/>
            <person name="Osborne J."/>
            <person name="Ding L."/>
            <person name="Meyer R."/>
            <person name="Sabo A."/>
            <person name="Shotland Y."/>
            <person name="Sinha P."/>
            <person name="Wohldmann P.E."/>
            <person name="Cook L.L."/>
            <person name="Hickenbotham M.T."/>
            <person name="Eldred J."/>
            <person name="Williams D."/>
            <person name="Jones T.A."/>
            <person name="She X."/>
            <person name="Ciccarelli F.D."/>
            <person name="Izaurralde E."/>
            <person name="Taylor J."/>
            <person name="Schmutz J."/>
            <person name="Myers R.M."/>
            <person name="Cox D.R."/>
            <person name="Huang X."/>
            <person name="McPherson J.D."/>
            <person name="Mardis E.R."/>
            <person name="Clifton S.W."/>
            <person name="Warren W.C."/>
            <person name="Chinwalla A.T."/>
            <person name="Eddy S.R."/>
            <person name="Marra M.A."/>
            <person name="Ovcharenko I."/>
            <person name="Furey T.S."/>
            <person name="Miller W."/>
            <person name="Eichler E.E."/>
            <person name="Bork P."/>
            <person name="Suyama M."/>
            <person name="Torrents D."/>
            <person name="Waterston R.H."/>
            <person name="Wilson R.K."/>
        </authorList>
    </citation>
    <scope>NUCLEOTIDE SEQUENCE [LARGE SCALE GENOMIC DNA]</scope>
</reference>
<reference key="5">
    <citation type="submission" date="2005-09" db="EMBL/GenBank/DDBJ databases">
        <authorList>
            <person name="Mural R.J."/>
            <person name="Istrail S."/>
            <person name="Sutton G."/>
            <person name="Florea L."/>
            <person name="Halpern A.L."/>
            <person name="Mobarry C.M."/>
            <person name="Lippert R."/>
            <person name="Walenz B."/>
            <person name="Shatkay H."/>
            <person name="Dew I."/>
            <person name="Miller J.R."/>
            <person name="Flanigan M.J."/>
            <person name="Edwards N.J."/>
            <person name="Bolanos R."/>
            <person name="Fasulo D."/>
            <person name="Halldorsson B.V."/>
            <person name="Hannenhalli S."/>
            <person name="Turner R."/>
            <person name="Yooseph S."/>
            <person name="Lu F."/>
            <person name="Nusskern D.R."/>
            <person name="Shue B.C."/>
            <person name="Zheng X.H."/>
            <person name="Zhong F."/>
            <person name="Delcher A.L."/>
            <person name="Huson D.H."/>
            <person name="Kravitz S.A."/>
            <person name="Mouchard L."/>
            <person name="Reinert K."/>
            <person name="Remington K.A."/>
            <person name="Clark A.G."/>
            <person name="Waterman M.S."/>
            <person name="Eichler E.E."/>
            <person name="Adams M.D."/>
            <person name="Hunkapiller M.W."/>
            <person name="Myers E.W."/>
            <person name="Venter J.C."/>
        </authorList>
    </citation>
    <scope>NUCLEOTIDE SEQUENCE [LARGE SCALE GENOMIC DNA]</scope>
</reference>
<reference key="6">
    <citation type="journal article" date="2004" name="Genome Res.">
        <title>The status, quality, and expansion of the NIH full-length cDNA project: the Mammalian Gene Collection (MGC).</title>
        <authorList>
            <consortium name="The MGC Project Team"/>
        </authorList>
    </citation>
    <scope>NUCLEOTIDE SEQUENCE [LARGE SCALE MRNA]</scope>
    <source>
        <tissue>Brain</tissue>
    </source>
</reference>
<reference key="7">
    <citation type="journal article" date="2018" name="Nat. Cell Biol.">
        <title>Fam49/CYRI interacts with Rac1 and locally suppresses protrusions.</title>
        <authorList>
            <person name="Fort L."/>
            <person name="Batista J.M."/>
            <person name="Thomason P.A."/>
            <person name="Spence H.J."/>
            <person name="Whitelaw J.A."/>
            <person name="Tweedy L."/>
            <person name="Greaves J."/>
            <person name="Martin K.J."/>
            <person name="Anderson K.I."/>
            <person name="Brown P."/>
            <person name="Lilla S."/>
            <person name="Neilson M.P."/>
            <person name="Tafelmeyer P."/>
            <person name="Zanivan S."/>
            <person name="Ismail S."/>
            <person name="Bryant D.M."/>
            <person name="Tomkinson N.C.O."/>
            <person name="Chamberlain L.H."/>
            <person name="Mastick G.S."/>
            <person name="Insall R.H."/>
            <person name="Machesky L.M."/>
        </authorList>
    </citation>
    <scope>FUNCTION</scope>
</reference>
<evidence type="ECO:0000250" key="1">
    <source>
        <dbReference type="UniProtKB" id="Q9NUQ9"/>
    </source>
</evidence>
<evidence type="ECO:0000303" key="2">
    <source>
    </source>
</evidence>
<evidence type="ECO:0000305" key="3"/>
<evidence type="ECO:0000305" key="4">
    <source>
    </source>
</evidence>
<evidence type="ECO:0000312" key="5">
    <source>
        <dbReference type="HGNC" id="HGNC:25373"/>
    </source>
</evidence>
<name>CYRIA_HUMAN</name>
<protein>
    <recommendedName>
        <fullName evidence="3">CYFIP-related Rac1 interactor A</fullName>
    </recommendedName>
    <alternativeName>
        <fullName>Protein CYRIA</fullName>
    </alternativeName>
</protein>
<sequence length="323" mass="37313">MGNLLKVLTREIENYPHFFLDFENAQPTEGEREIWNQISAVLQDSESILADLQAYKGAGPEIRDAIQNPNDIQLQEKAWNAVCPLVVRLKRFYEFSIRLEKALQSLLESLTCPPYTPTQHLEREQALAKEFAEILHFTLRFDELKMRNPAIQNDFSYYRRTISRNRINNMHLDIENEVNNEMANRMSLFYAEATPMLKTLSNATMHFVSENKTLPIENTTDCLSTMTSVCKVMLETPEYRSRFTSEETLMFCMRVMVGVIILYDHVHPVGAFCKTSKIDMKGCIKVLKEQAPDSVEGLLNALRFTTKHLNDESTSKQIRAMLQ</sequence>
<feature type="chain" id="PRO_0000187058" description="CYFIP-related Rac1 interactor A">
    <location>
        <begin position="1"/>
        <end position="323"/>
    </location>
</feature>
<feature type="sequence conflict" description="In Ref. 2; BAG51503." evidence="3" ref="2">
    <original>E</original>
    <variation>D</variation>
    <location>
        <position position="29"/>
    </location>
</feature>
<keyword id="KW-0449">Lipoprotein</keyword>
<keyword id="KW-0472">Membrane</keyword>
<keyword id="KW-1267">Proteomics identification</keyword>
<keyword id="KW-1185">Reference proteome</keyword>
<organism>
    <name type="scientific">Homo sapiens</name>
    <name type="common">Human</name>
    <dbReference type="NCBI Taxonomy" id="9606"/>
    <lineage>
        <taxon>Eukaryota</taxon>
        <taxon>Metazoa</taxon>
        <taxon>Chordata</taxon>
        <taxon>Craniata</taxon>
        <taxon>Vertebrata</taxon>
        <taxon>Euteleostomi</taxon>
        <taxon>Mammalia</taxon>
        <taxon>Eutheria</taxon>
        <taxon>Euarchontoglires</taxon>
        <taxon>Primates</taxon>
        <taxon>Haplorrhini</taxon>
        <taxon>Catarrhini</taxon>
        <taxon>Hominidae</taxon>
        <taxon>Homo</taxon>
    </lineage>
</organism>
<proteinExistence type="evidence at protein level"/>
<gene>
    <name evidence="2 5" type="primary">CYRIA</name>
    <name type="synonym">FAM49A</name>
</gene>